<keyword id="KW-0489">Methyltransferase</keyword>
<keyword id="KW-1185">Reference proteome</keyword>
<keyword id="KW-0808">Transferase</keyword>
<reference key="1">
    <citation type="journal article" date="1997" name="Nature">
        <title>Genomic sequence of a Lyme disease spirochaete, Borrelia burgdorferi.</title>
        <authorList>
            <person name="Fraser C.M."/>
            <person name="Casjens S."/>
            <person name="Huang W.M."/>
            <person name="Sutton G.G."/>
            <person name="Clayton R.A."/>
            <person name="Lathigra R."/>
            <person name="White O."/>
            <person name="Ketchum K.A."/>
            <person name="Dodson R.J."/>
            <person name="Hickey E.K."/>
            <person name="Gwinn M.L."/>
            <person name="Dougherty B.A."/>
            <person name="Tomb J.-F."/>
            <person name="Fleischmann R.D."/>
            <person name="Richardson D.L."/>
            <person name="Peterson J.D."/>
            <person name="Kerlavage A.R."/>
            <person name="Quackenbush J."/>
            <person name="Salzberg S.L."/>
            <person name="Hanson M."/>
            <person name="van Vugt R."/>
            <person name="Palmer N."/>
            <person name="Adams M.D."/>
            <person name="Gocayne J.D."/>
            <person name="Weidman J.F."/>
            <person name="Utterback T.R."/>
            <person name="Watthey L."/>
            <person name="McDonald L.A."/>
            <person name="Artiach P."/>
            <person name="Bowman C."/>
            <person name="Garland S.A."/>
            <person name="Fujii C."/>
            <person name="Cotton M.D."/>
            <person name="Horst K."/>
            <person name="Roberts K.M."/>
            <person name="Hatch B."/>
            <person name="Smith H.O."/>
            <person name="Venter J.C."/>
        </authorList>
    </citation>
    <scope>NUCLEOTIDE SEQUENCE [LARGE SCALE GENOMIC DNA]</scope>
    <source>
        <strain>ATCC 35210 / DSM 4680 / CIP 102532 / B31</strain>
    </source>
</reference>
<comment type="similarity">
    <text evidence="2">Belongs to the class IV-like SAM-binding methyltransferase superfamily. RNA methyltransferase TrmH family.</text>
</comment>
<protein>
    <recommendedName>
        <fullName>Uncharacterized tRNA/rRNA methyltransferase BB_0516</fullName>
        <ecNumber>2.1.1.-</ecNumber>
    </recommendedName>
</protein>
<feature type="chain" id="PRO_0000159823" description="Uncharacterized tRNA/rRNA methyltransferase BB_0516">
    <location>
        <begin position="1"/>
        <end position="228"/>
    </location>
</feature>
<feature type="binding site" evidence="1">
    <location>
        <position position="179"/>
    </location>
    <ligand>
        <name>S-adenosyl-L-methionine</name>
        <dbReference type="ChEBI" id="CHEBI:59789"/>
    </ligand>
</feature>
<feature type="binding site" evidence="1">
    <location>
        <position position="199"/>
    </location>
    <ligand>
        <name>S-adenosyl-L-methionine</name>
        <dbReference type="ChEBI" id="CHEBI:59789"/>
    </ligand>
</feature>
<feature type="binding site" evidence="1">
    <location>
        <position position="208"/>
    </location>
    <ligand>
        <name>S-adenosyl-L-methionine</name>
        <dbReference type="ChEBI" id="CHEBI:59789"/>
    </ligand>
</feature>
<organism>
    <name type="scientific">Borreliella burgdorferi (strain ATCC 35210 / DSM 4680 / CIP 102532 / B31)</name>
    <name type="common">Borrelia burgdorferi</name>
    <dbReference type="NCBI Taxonomy" id="224326"/>
    <lineage>
        <taxon>Bacteria</taxon>
        <taxon>Pseudomonadati</taxon>
        <taxon>Spirochaetota</taxon>
        <taxon>Spirochaetia</taxon>
        <taxon>Spirochaetales</taxon>
        <taxon>Borreliaceae</taxon>
        <taxon>Borreliella</taxon>
    </lineage>
</organism>
<accession>O51468</accession>
<evidence type="ECO:0000250" key="1"/>
<evidence type="ECO:0000305" key="2"/>
<name>Y516_BORBU</name>
<sequence>MNFIYQKKSPKTKEIEQLAKTQNIKIIRINTNELDKILKNKDHRGFALKLKLEKNKNVKTQTKDFENLLETFKKKENAFILLLDEIEDPQNFGAILRTAEQFSIDLVITTQKRSAKDNSTVLRTSSGASQYVKKMTVTNINNTINLLKNYGFWIYTGDIKGQDINKIKINDKKIALILGNEGKGVHKLIKENSDFLIRIPTSGKIDSLNVSVSTGILIFEIKRQLNLL</sequence>
<proteinExistence type="inferred from homology"/>
<dbReference type="EC" id="2.1.1.-"/>
<dbReference type="EMBL" id="AE000783">
    <property type="status" value="NOT_ANNOTATED_CDS"/>
    <property type="molecule type" value="Genomic_DNA"/>
</dbReference>
<dbReference type="PIR" id="C70164">
    <property type="entry name" value="C70164"/>
</dbReference>
<dbReference type="SMR" id="O51468"/>
<dbReference type="Proteomes" id="UP000001807">
    <property type="component" value="Chromosome"/>
</dbReference>
<dbReference type="GO" id="GO:0005829">
    <property type="term" value="C:cytosol"/>
    <property type="evidence" value="ECO:0007669"/>
    <property type="project" value="TreeGrafter"/>
</dbReference>
<dbReference type="GO" id="GO:0003723">
    <property type="term" value="F:RNA binding"/>
    <property type="evidence" value="ECO:0007669"/>
    <property type="project" value="InterPro"/>
</dbReference>
<dbReference type="GO" id="GO:0008173">
    <property type="term" value="F:RNA methyltransferase activity"/>
    <property type="evidence" value="ECO:0007669"/>
    <property type="project" value="InterPro"/>
</dbReference>
<dbReference type="GO" id="GO:0032259">
    <property type="term" value="P:methylation"/>
    <property type="evidence" value="ECO:0007669"/>
    <property type="project" value="UniProtKB-KW"/>
</dbReference>
<dbReference type="GO" id="GO:0006396">
    <property type="term" value="P:RNA processing"/>
    <property type="evidence" value="ECO:0007669"/>
    <property type="project" value="InterPro"/>
</dbReference>
<dbReference type="CDD" id="cd18103">
    <property type="entry name" value="SpoU-like_RlmB"/>
    <property type="match status" value="1"/>
</dbReference>
<dbReference type="Gene3D" id="3.30.1330.30">
    <property type="match status" value="1"/>
</dbReference>
<dbReference type="Gene3D" id="3.40.1280.10">
    <property type="match status" value="1"/>
</dbReference>
<dbReference type="InterPro" id="IPR029028">
    <property type="entry name" value="Alpha/beta_knot_MTases"/>
</dbReference>
<dbReference type="InterPro" id="IPR029064">
    <property type="entry name" value="Ribosomal_eL30-like_sf"/>
</dbReference>
<dbReference type="InterPro" id="IPR004441">
    <property type="entry name" value="rRNA_MeTrfase_TrmH"/>
</dbReference>
<dbReference type="InterPro" id="IPR001537">
    <property type="entry name" value="SpoU_MeTrfase"/>
</dbReference>
<dbReference type="InterPro" id="IPR013123">
    <property type="entry name" value="SpoU_subst-bd"/>
</dbReference>
<dbReference type="InterPro" id="IPR029026">
    <property type="entry name" value="tRNA_m1G_MTases_N"/>
</dbReference>
<dbReference type="NCBIfam" id="TIGR00186">
    <property type="entry name" value="rRNA_methyl_3"/>
    <property type="match status" value="1"/>
</dbReference>
<dbReference type="PANTHER" id="PTHR46429">
    <property type="entry name" value="23S RRNA (GUANOSINE-2'-O-)-METHYLTRANSFERASE RLMB"/>
    <property type="match status" value="1"/>
</dbReference>
<dbReference type="PANTHER" id="PTHR46429:SF1">
    <property type="entry name" value="23S RRNA (GUANOSINE-2'-O-)-METHYLTRANSFERASE RLMB"/>
    <property type="match status" value="1"/>
</dbReference>
<dbReference type="Pfam" id="PF00588">
    <property type="entry name" value="SpoU_methylase"/>
    <property type="match status" value="1"/>
</dbReference>
<dbReference type="Pfam" id="PF08032">
    <property type="entry name" value="SpoU_sub_bind"/>
    <property type="match status" value="1"/>
</dbReference>
<dbReference type="SUPFAM" id="SSF75217">
    <property type="entry name" value="alpha/beta knot"/>
    <property type="match status" value="1"/>
</dbReference>
<gene>
    <name type="ordered locus">BB_0516</name>
</gene>